<gene>
    <name evidence="1" type="primary">rnhB</name>
    <name type="ordered locus">VSAL_I2413</name>
</gene>
<accession>B6EJW6</accession>
<dbReference type="EC" id="3.1.26.4" evidence="1"/>
<dbReference type="EMBL" id="FM178379">
    <property type="protein sequence ID" value="CAQ80097.1"/>
    <property type="molecule type" value="Genomic_DNA"/>
</dbReference>
<dbReference type="RefSeq" id="WP_012550901.1">
    <property type="nucleotide sequence ID" value="NC_011312.1"/>
</dbReference>
<dbReference type="SMR" id="B6EJW6"/>
<dbReference type="KEGG" id="vsa:VSAL_I2413"/>
<dbReference type="eggNOG" id="COG0164">
    <property type="taxonomic scope" value="Bacteria"/>
</dbReference>
<dbReference type="HOGENOM" id="CLU_036532_3_2_6"/>
<dbReference type="Proteomes" id="UP000001730">
    <property type="component" value="Chromosome 1"/>
</dbReference>
<dbReference type="GO" id="GO:0005737">
    <property type="term" value="C:cytoplasm"/>
    <property type="evidence" value="ECO:0007669"/>
    <property type="project" value="UniProtKB-SubCell"/>
</dbReference>
<dbReference type="GO" id="GO:0032299">
    <property type="term" value="C:ribonuclease H2 complex"/>
    <property type="evidence" value="ECO:0007669"/>
    <property type="project" value="TreeGrafter"/>
</dbReference>
<dbReference type="GO" id="GO:0030145">
    <property type="term" value="F:manganese ion binding"/>
    <property type="evidence" value="ECO:0007669"/>
    <property type="project" value="UniProtKB-UniRule"/>
</dbReference>
<dbReference type="GO" id="GO:0003723">
    <property type="term" value="F:RNA binding"/>
    <property type="evidence" value="ECO:0007669"/>
    <property type="project" value="InterPro"/>
</dbReference>
<dbReference type="GO" id="GO:0004523">
    <property type="term" value="F:RNA-DNA hybrid ribonuclease activity"/>
    <property type="evidence" value="ECO:0007669"/>
    <property type="project" value="UniProtKB-UniRule"/>
</dbReference>
<dbReference type="GO" id="GO:0043137">
    <property type="term" value="P:DNA replication, removal of RNA primer"/>
    <property type="evidence" value="ECO:0007669"/>
    <property type="project" value="TreeGrafter"/>
</dbReference>
<dbReference type="GO" id="GO:0006298">
    <property type="term" value="P:mismatch repair"/>
    <property type="evidence" value="ECO:0007669"/>
    <property type="project" value="TreeGrafter"/>
</dbReference>
<dbReference type="CDD" id="cd07182">
    <property type="entry name" value="RNase_HII_bacteria_HII_like"/>
    <property type="match status" value="1"/>
</dbReference>
<dbReference type="FunFam" id="3.30.420.10:FF:000006">
    <property type="entry name" value="Ribonuclease HII"/>
    <property type="match status" value="1"/>
</dbReference>
<dbReference type="Gene3D" id="3.30.420.10">
    <property type="entry name" value="Ribonuclease H-like superfamily/Ribonuclease H"/>
    <property type="match status" value="1"/>
</dbReference>
<dbReference type="HAMAP" id="MF_00052_B">
    <property type="entry name" value="RNase_HII_B"/>
    <property type="match status" value="1"/>
</dbReference>
<dbReference type="InterPro" id="IPR022898">
    <property type="entry name" value="RNase_HII"/>
</dbReference>
<dbReference type="InterPro" id="IPR001352">
    <property type="entry name" value="RNase_HII/HIII"/>
</dbReference>
<dbReference type="InterPro" id="IPR024567">
    <property type="entry name" value="RNase_HII/HIII_dom"/>
</dbReference>
<dbReference type="InterPro" id="IPR012337">
    <property type="entry name" value="RNaseH-like_sf"/>
</dbReference>
<dbReference type="InterPro" id="IPR036397">
    <property type="entry name" value="RNaseH_sf"/>
</dbReference>
<dbReference type="NCBIfam" id="NF000594">
    <property type="entry name" value="PRK00015.1-1"/>
    <property type="match status" value="1"/>
</dbReference>
<dbReference type="NCBIfam" id="NF000595">
    <property type="entry name" value="PRK00015.1-3"/>
    <property type="match status" value="1"/>
</dbReference>
<dbReference type="NCBIfam" id="NF000596">
    <property type="entry name" value="PRK00015.1-4"/>
    <property type="match status" value="1"/>
</dbReference>
<dbReference type="PANTHER" id="PTHR10954">
    <property type="entry name" value="RIBONUCLEASE H2 SUBUNIT A"/>
    <property type="match status" value="1"/>
</dbReference>
<dbReference type="PANTHER" id="PTHR10954:SF18">
    <property type="entry name" value="RIBONUCLEASE HII"/>
    <property type="match status" value="1"/>
</dbReference>
<dbReference type="Pfam" id="PF01351">
    <property type="entry name" value="RNase_HII"/>
    <property type="match status" value="1"/>
</dbReference>
<dbReference type="SUPFAM" id="SSF53098">
    <property type="entry name" value="Ribonuclease H-like"/>
    <property type="match status" value="1"/>
</dbReference>
<dbReference type="PROSITE" id="PS51975">
    <property type="entry name" value="RNASE_H_2"/>
    <property type="match status" value="1"/>
</dbReference>
<keyword id="KW-0963">Cytoplasm</keyword>
<keyword id="KW-0255">Endonuclease</keyword>
<keyword id="KW-0378">Hydrolase</keyword>
<keyword id="KW-0464">Manganese</keyword>
<keyword id="KW-0479">Metal-binding</keyword>
<keyword id="KW-0540">Nuclease</keyword>
<sequence length="207" mass="22870">MTKKIDSKELPPFEYPQGYQLFAGVDEVGRGPLVGAVVTAAVILDPNNPIEGLTDSKKLTEKKRDLLFPEIQEKALAWSLGRCEAHEIDELNILQATMVAMQRAIAGLKVTPDFALIDGNKVPELPMAGLAVVKGDLRVQEISAASILAKVTRDREMEVLDKEFPQYGFAKHKGYPTKAHFAAIEEHGVISEHRRSFKPVKRVLGIE</sequence>
<proteinExistence type="inferred from homology"/>
<evidence type="ECO:0000255" key="1">
    <source>
        <dbReference type="HAMAP-Rule" id="MF_00052"/>
    </source>
</evidence>
<evidence type="ECO:0000255" key="2">
    <source>
        <dbReference type="PROSITE-ProRule" id="PRU01319"/>
    </source>
</evidence>
<comment type="function">
    <text evidence="1">Endonuclease that specifically degrades the RNA of RNA-DNA hybrids.</text>
</comment>
<comment type="catalytic activity">
    <reaction evidence="1">
        <text>Endonucleolytic cleavage to 5'-phosphomonoester.</text>
        <dbReference type="EC" id="3.1.26.4"/>
    </reaction>
</comment>
<comment type="cofactor">
    <cofactor evidence="1">
        <name>Mn(2+)</name>
        <dbReference type="ChEBI" id="CHEBI:29035"/>
    </cofactor>
    <cofactor evidence="1">
        <name>Mg(2+)</name>
        <dbReference type="ChEBI" id="CHEBI:18420"/>
    </cofactor>
    <text evidence="1">Manganese or magnesium. Binds 1 divalent metal ion per monomer in the absence of substrate. May bind a second metal ion after substrate binding.</text>
</comment>
<comment type="subcellular location">
    <subcellularLocation>
        <location evidence="1">Cytoplasm</location>
    </subcellularLocation>
</comment>
<comment type="similarity">
    <text evidence="1">Belongs to the RNase HII family.</text>
</comment>
<protein>
    <recommendedName>
        <fullName evidence="1">Ribonuclease HII</fullName>
        <shortName evidence="1">RNase HII</shortName>
        <ecNumber evidence="1">3.1.26.4</ecNumber>
    </recommendedName>
</protein>
<name>RNH2_ALISL</name>
<feature type="chain" id="PRO_1000091604" description="Ribonuclease HII">
    <location>
        <begin position="1"/>
        <end position="207"/>
    </location>
</feature>
<feature type="domain" description="RNase H type-2" evidence="2">
    <location>
        <begin position="20"/>
        <end position="207"/>
    </location>
</feature>
<feature type="binding site" evidence="1">
    <location>
        <position position="26"/>
    </location>
    <ligand>
        <name>a divalent metal cation</name>
        <dbReference type="ChEBI" id="CHEBI:60240"/>
    </ligand>
</feature>
<feature type="binding site" evidence="1">
    <location>
        <position position="27"/>
    </location>
    <ligand>
        <name>a divalent metal cation</name>
        <dbReference type="ChEBI" id="CHEBI:60240"/>
    </ligand>
</feature>
<feature type="binding site" evidence="1">
    <location>
        <position position="118"/>
    </location>
    <ligand>
        <name>a divalent metal cation</name>
        <dbReference type="ChEBI" id="CHEBI:60240"/>
    </ligand>
</feature>
<reference key="1">
    <citation type="journal article" date="2008" name="BMC Genomics">
        <title>The genome sequence of the fish pathogen Aliivibrio salmonicida strain LFI1238 shows extensive evidence of gene decay.</title>
        <authorList>
            <person name="Hjerde E."/>
            <person name="Lorentzen M.S."/>
            <person name="Holden M.T."/>
            <person name="Seeger K."/>
            <person name="Paulsen S."/>
            <person name="Bason N."/>
            <person name="Churcher C."/>
            <person name="Harris D."/>
            <person name="Norbertczak H."/>
            <person name="Quail M.A."/>
            <person name="Sanders S."/>
            <person name="Thurston S."/>
            <person name="Parkhill J."/>
            <person name="Willassen N.P."/>
            <person name="Thomson N.R."/>
        </authorList>
    </citation>
    <scope>NUCLEOTIDE SEQUENCE [LARGE SCALE GENOMIC DNA]</scope>
    <source>
        <strain>LFI1238</strain>
    </source>
</reference>
<organism>
    <name type="scientific">Aliivibrio salmonicida (strain LFI1238)</name>
    <name type="common">Vibrio salmonicida (strain LFI1238)</name>
    <dbReference type="NCBI Taxonomy" id="316275"/>
    <lineage>
        <taxon>Bacteria</taxon>
        <taxon>Pseudomonadati</taxon>
        <taxon>Pseudomonadota</taxon>
        <taxon>Gammaproteobacteria</taxon>
        <taxon>Vibrionales</taxon>
        <taxon>Vibrionaceae</taxon>
        <taxon>Aliivibrio</taxon>
    </lineage>
</organism>